<keyword id="KW-0002">3D-structure</keyword>
<keyword id="KW-0025">Alternative splicing</keyword>
<keyword id="KW-0050">Antiport</keyword>
<keyword id="KW-1003">Cell membrane</keyword>
<keyword id="KW-0966">Cell projection</keyword>
<keyword id="KW-0969">Cilium</keyword>
<keyword id="KW-0968">Cytoplasmic vesicle</keyword>
<keyword id="KW-0967">Endosome</keyword>
<keyword id="KW-0282">Flagellum</keyword>
<keyword id="KW-0375">Hydrogen ion transport</keyword>
<keyword id="KW-0406">Ion transport</keyword>
<keyword id="KW-0472">Membrane</keyword>
<keyword id="KW-0496">Mitochondrion</keyword>
<keyword id="KW-0597">Phosphoprotein</keyword>
<keyword id="KW-1267">Proteomics identification</keyword>
<keyword id="KW-1185">Reference proteome</keyword>
<keyword id="KW-0915">Sodium</keyword>
<keyword id="KW-0739">Sodium transport</keyword>
<keyword id="KW-0770">Synapse</keyword>
<keyword id="KW-0812">Transmembrane</keyword>
<keyword id="KW-1133">Transmembrane helix</keyword>
<keyword id="KW-0813">Transport</keyword>
<accession>Q86UD5</accession>
<accession>B5ME52</accession>
<accession>Q6ZMD8</accession>
<accession>Q96D95</accession>
<comment type="function">
    <text evidence="2 4 5 6 9 10">Electroneutral Na(+) Li(+)/H(+) antiporter that extrudes Na(+) or Li(+) in exchange for external protons across the membrane (PubMed:18000046, PubMed:18508966, PubMed:22948142, PubMed:28154142, PubMed:36177733). Uses the proton gradient/membrane potential to extrude sodium (PubMed:22948142). Contributes to the regulation of intracellular pH and sodium homeostasis (By similarity). Also able to mediate Na(+)/Li(+) antiporter activity in kidney (PubMed:22948142). May play a physiological role in renal tubular function and blood pressure homeostasis (By similarity). Plays an important role for insulin secretion and clathrin-mediated endocytosis in beta-cells (By similarity). Involved in sperm motility and fertility (By similarity). It is controversial whether SLC9B2 plays a role in osteoclast differentiation or not (By similarity).</text>
</comment>
<comment type="catalytic activity">
    <reaction evidence="6 9 10">
        <text>Li(+)(out) + H(+)(in) = Li(+)(in) + H(+)(out)</text>
        <dbReference type="Rhea" id="RHEA:72407"/>
        <dbReference type="ChEBI" id="CHEBI:15378"/>
        <dbReference type="ChEBI" id="CHEBI:49713"/>
    </reaction>
</comment>
<comment type="catalytic activity">
    <reaction evidence="6">
        <text>Li(+)(in) + Na(+)(out) = Li(+)(out) + Na(+)(in)</text>
        <dbReference type="Rhea" id="RHEA:72415"/>
        <dbReference type="ChEBI" id="CHEBI:29101"/>
        <dbReference type="ChEBI" id="CHEBI:49713"/>
    </reaction>
</comment>
<comment type="catalytic activity">
    <reaction evidence="4 10">
        <text>Na(+)(in) + H(+)(out) = Na(+)(out) + H(+)(in)</text>
        <dbReference type="Rhea" id="RHEA:29419"/>
        <dbReference type="ChEBI" id="CHEBI:15378"/>
        <dbReference type="ChEBI" id="CHEBI:29101"/>
    </reaction>
</comment>
<comment type="activity regulation">
    <text evidence="4 10">Allosterically inhibited by the N-terminal domain (PubMed:36177733). Inhibited by phloretin (PubMed:18000046, PubMed:36177733).</text>
</comment>
<comment type="biophysicochemical properties">
    <kinetics>
        <KM evidence="9">33 mM for Na(+)</KM>
        <KM evidence="9">67 mM for Li(+)</KM>
    </kinetics>
</comment>
<comment type="subunit">
    <text evidence="1 8">Homodimer (PubMed:28071645). Dimerization is essential for SLC9B2 activity (By similarity). Lipids seem to play a role in the stabilization of the dimerization subdomain (By similarity).</text>
</comment>
<comment type="interaction">
    <interactant intactId="EBI-9916342">
        <id>Q86UD5</id>
    </interactant>
    <interactant intactId="EBI-1050125">
        <id>O15173</id>
        <label>PGRMC2</label>
    </interactant>
    <organismsDiffer>false</organismsDiffer>
    <experiments>3</experiments>
</comment>
<comment type="subcellular location">
    <subcellularLocation>
        <location evidence="4 10">Cell membrane</location>
        <topology evidence="1">Multi-pass membrane protein</topology>
    </subcellularLocation>
    <subcellularLocation>
        <location evidence="2">Mitochondrion membrane</location>
        <topology evidence="1">Multi-pass membrane protein</topology>
    </subcellularLocation>
    <subcellularLocation>
        <location evidence="2">Endosome membrane</location>
        <topology evidence="1">Multi-pass membrane protein</topology>
    </subcellularLocation>
    <subcellularLocation>
        <location evidence="2">Recycling endosome membrane</location>
        <topology evidence="1">Multi-pass membrane protein</topology>
    </subcellularLocation>
    <subcellularLocation>
        <location evidence="2">Cytoplasmic vesicle</location>
        <location evidence="2">Secretory vesicle</location>
        <location evidence="2">Synaptic vesicle membrane</location>
        <topology evidence="1">Multi-pass membrane protein</topology>
    </subcellularLocation>
    <subcellularLocation>
        <location evidence="2">Cell projection</location>
        <location evidence="2">Cilium</location>
        <location evidence="2">Flagellum membrane</location>
        <topology evidence="1">Multi-pass membrane protein</topology>
    </subcellularLocation>
    <subcellularLocation>
        <location evidence="2">Basolateral cell membrane</location>
        <topology evidence="1">Multi-pass membrane protein</topology>
    </subcellularLocation>
    <subcellularLocation>
        <location evidence="2">Apical cell membrane</location>
        <topology evidence="1">Multi-pass membrane protein</topology>
    </subcellularLocation>
    <text evidence="2">Strong colocalization with LAMP1 and TCIRG1 in osteoclasts. In beta-cells colocalizes with RAB4A and SYP. Localizes to the basolateral membrane of polarized osteoclasts.</text>
</comment>
<comment type="alternative products">
    <event type="alternative splicing"/>
    <isoform>
        <id>Q86UD5-1</id>
        <name>1</name>
        <sequence type="displayed"/>
    </isoform>
    <isoform>
        <id>Q86UD5-2</id>
        <name>2</name>
        <sequence type="described" ref="VSP_033152 VSP_033153"/>
    </isoform>
</comment>
<comment type="tissue specificity">
    <text evidence="4 5">Widely expressed (PubMed:18508966). High levels detected in the distal tubules of the kidney nephron (PubMed:18508966). Detected in red blood cells (at protein level) (PubMed:18000046, PubMed:18508966).</text>
</comment>
<comment type="miscellaneous">
    <text evidence="2">The subcellular localization of SLC9B2 remains controversial. Was initially thought to partially localize to mitochondria (By similarity). However SLC9B2 does not seem to contain a mitochondrial targeting sequence. It was later established that its localizes predominantly in plasma membrane or intracellularly to endosomes and lysosomes (By similarity). In another recent study, endogenous SLC9B2 in the distal tubular cell line mpkDCT4 is detected in recycling endosomes but absent in plasma membrane (By similarity).</text>
</comment>
<comment type="similarity">
    <text evidence="13">Belongs to the monovalent cation:proton antiporter 1 (CPA1) transporter (TC 2.A.36) family.</text>
</comment>
<protein>
    <recommendedName>
        <fullName>Sodium/hydrogen exchanger 9B2</fullName>
    </recommendedName>
    <alternativeName>
        <fullName>Na(+)/H(+) exchanger NHA2</fullName>
    </alternativeName>
    <alternativeName>
        <fullName>Na(+)/H(+) exchanger-like domain-containing protein 2</fullName>
        <shortName>NHE domain-containing protein 2</shortName>
    </alternativeName>
    <alternativeName>
        <fullName>Sodium/hydrogen exchanger-like domain-containing protein 2</fullName>
    </alternativeName>
    <alternativeName>
        <fullName>Solute carrier family 9 subfamily B member 2</fullName>
    </alternativeName>
</protein>
<proteinExistence type="evidence at protein level"/>
<feature type="chain" id="PRO_0000331270" description="Sodium/hydrogen exchanger 9B2">
    <location>
        <begin position="1"/>
        <end position="537"/>
    </location>
</feature>
<feature type="topological domain" description="Cytoplasmic" evidence="13">
    <location>
        <begin position="1"/>
        <end position="86"/>
    </location>
</feature>
<feature type="transmembrane region" description="Helical; Name=1" evidence="1">
    <location>
        <begin position="87"/>
        <end position="104"/>
    </location>
</feature>
<feature type="topological domain" description="Extracellular" evidence="13">
    <location>
        <begin position="105"/>
        <end position="113"/>
    </location>
</feature>
<feature type="transmembrane region" description="Helical; Name=2" evidence="1">
    <location>
        <begin position="114"/>
        <end position="133"/>
    </location>
</feature>
<feature type="topological domain" description="Cytoplasmic" evidence="13">
    <location>
        <begin position="134"/>
        <end position="144"/>
    </location>
</feature>
<feature type="transmembrane region" description="Helical; Name=3" evidence="1">
    <location>
        <begin position="145"/>
        <end position="161"/>
    </location>
</feature>
<feature type="topological domain" description="Extracellular" evidence="13">
    <location>
        <begin position="162"/>
        <end position="171"/>
    </location>
</feature>
<feature type="transmembrane region" description="Helical; Name=4" evidence="1">
    <location>
        <begin position="172"/>
        <end position="189"/>
    </location>
</feature>
<feature type="topological domain" description="Cytoplasmic" evidence="13">
    <location>
        <begin position="190"/>
        <end position="200"/>
    </location>
</feature>
<feature type="transmembrane region" description="Helical; Name=5" evidence="1">
    <location>
        <begin position="201"/>
        <end position="227"/>
    </location>
</feature>
<feature type="topological domain" description="Extracellular" evidence="13">
    <location>
        <begin position="228"/>
        <end position="233"/>
    </location>
</feature>
<feature type="transmembrane region" description="Helical; Name=6" evidence="1">
    <location>
        <begin position="234"/>
        <end position="242"/>
    </location>
</feature>
<feature type="topological domain" description="Cytoplasmic" evidence="13">
    <location>
        <begin position="243"/>
        <end position="270"/>
    </location>
</feature>
<feature type="transmembrane region" description="Helical; Name=7" evidence="1">
    <location>
        <begin position="271"/>
        <end position="290"/>
    </location>
</feature>
<feature type="topological domain" description="Extracellular" evidence="13">
    <location>
        <begin position="291"/>
        <end position="300"/>
    </location>
</feature>
<feature type="transmembrane region" description="Helical; Name=8" evidence="1">
    <location>
        <begin position="301"/>
        <end position="324"/>
    </location>
</feature>
<feature type="topological domain" description="Cytoplasmic" evidence="13">
    <location>
        <begin position="325"/>
        <end position="339"/>
    </location>
</feature>
<feature type="transmembrane region" description="Helical; Name=9" evidence="1">
    <location>
        <begin position="340"/>
        <end position="357"/>
    </location>
</feature>
<feature type="topological domain" description="Extracellular" evidence="13">
    <location>
        <begin position="358"/>
        <end position="361"/>
    </location>
</feature>
<feature type="transmembrane region" description="Helical; Name=10" evidence="1">
    <location>
        <begin position="362"/>
        <end position="373"/>
    </location>
</feature>
<feature type="topological domain" description="Cytoplasmic" evidence="13">
    <location>
        <begin position="374"/>
        <end position="390"/>
    </location>
</feature>
<feature type="transmembrane region" description="Helical; Name=11" evidence="1">
    <location>
        <begin position="391"/>
        <end position="411"/>
    </location>
</feature>
<feature type="topological domain" description="Extracellular" evidence="13">
    <location>
        <begin position="412"/>
        <end position="417"/>
    </location>
</feature>
<feature type="transmembrane region" description="Helical; Name=12" evidence="1">
    <location>
        <begin position="418"/>
        <end position="440"/>
    </location>
</feature>
<feature type="topological domain" description="Cytoplasmic" evidence="13">
    <location>
        <begin position="441"/>
        <end position="461"/>
    </location>
</feature>
<feature type="transmembrane region" description="Helical; Name=13" evidence="1">
    <location>
        <begin position="462"/>
        <end position="473"/>
    </location>
</feature>
<feature type="topological domain" description="Extracellular" evidence="13">
    <location>
        <begin position="474"/>
        <end position="486"/>
    </location>
</feature>
<feature type="transmembrane region" description="Helical; Name=14" evidence="1">
    <location>
        <begin position="487"/>
        <end position="509"/>
    </location>
</feature>
<feature type="topological domain" description="Cytoplasmic" evidence="13">
    <location>
        <begin position="510"/>
        <end position="537"/>
    </location>
</feature>
<feature type="region of interest" description="Disordered" evidence="3">
    <location>
        <begin position="1"/>
        <end position="28"/>
    </location>
</feature>
<feature type="compositionally biased region" description="Basic and acidic residues" evidence="3">
    <location>
        <begin position="1"/>
        <end position="10"/>
    </location>
</feature>
<feature type="compositionally biased region" description="Polar residues" evidence="3">
    <location>
        <begin position="15"/>
        <end position="27"/>
    </location>
</feature>
<feature type="binding site" evidence="11 15">
    <location>
        <position position="244"/>
    </location>
    <ligand>
        <name>Na(+)</name>
        <dbReference type="ChEBI" id="CHEBI:29101"/>
    </ligand>
</feature>
<feature type="binding site" evidence="11 15">
    <location>
        <position position="275"/>
    </location>
    <ligand>
        <name>Na(+)</name>
        <dbReference type="ChEBI" id="CHEBI:29101"/>
    </ligand>
</feature>
<feature type="binding site" evidence="11 15">
    <location>
        <position position="278"/>
    </location>
    <ligand>
        <name>Na(+)</name>
        <dbReference type="ChEBI" id="CHEBI:29101"/>
    </ligand>
</feature>
<feature type="binding site" evidence="11 15">
    <location>
        <position position="279"/>
    </location>
    <ligand>
        <name>Na(+)</name>
        <dbReference type="ChEBI" id="CHEBI:29101"/>
    </ligand>
</feature>
<feature type="modified residue" description="Phosphoserine" evidence="18">
    <location>
        <position position="49"/>
    </location>
</feature>
<feature type="splice variant" id="VSP_033152" description="In isoform 2." evidence="12">
    <original>LCVATVGIAVLIRILTTFLMVCFAGFNLKEKIFISFAWLPKATVQAAIGSVALDTARSHGEKQLEDYGMDVLTVAFLSILITA</original>
    <variation>SADSITGNFGTERPKLLGPPSTQLRFHFFHIQLST</variation>
    <location>
        <begin position="420"/>
        <end position="502"/>
    </location>
</feature>
<feature type="splice variant" id="VSP_033153" description="In isoform 2." evidence="12">
    <location>
        <begin position="503"/>
        <end position="537"/>
    </location>
</feature>
<feature type="sequence variant" id="VAR_042751" description="In dbSNP:rs7672710.">
    <original>I</original>
    <variation>T</variation>
    <location>
        <position position="159"/>
    </location>
</feature>
<feature type="sequence variant" id="VAR_042752" description="In dbSNP:rs7672707.">
    <original>V</original>
    <variation>A</variation>
    <location>
        <position position="161"/>
    </location>
</feature>
<feature type="sequence variant" id="VAR_042753" description="In dbSNP:rs2276976.">
    <original>F</original>
    <variation>C</variation>
    <location>
        <position position="357"/>
    </location>
</feature>
<feature type="mutagenesis site" description="Decreases Na(+) Li(+)/H(+) antiporter activity." evidence="10">
    <original>E</original>
    <variation>A</variation>
    <variation>K</variation>
    <location>
        <position position="47"/>
    </location>
</feature>
<feature type="mutagenesis site" description="Decreases Na(+) Li(+)/H(+) antiporter activity." evidence="10">
    <original>E</original>
    <variation>A</variation>
    <variation>K</variation>
    <location>
        <position position="56"/>
    </location>
</feature>
<feature type="mutagenesis site" description="Does not affect Na(+) Li(+)/H(+) antiporter activity; when associated with A-58." evidence="10">
    <original>K</original>
    <variation>A</variation>
    <location>
        <position position="57"/>
    </location>
</feature>
<feature type="mutagenesis site" description="Decreases Na(+) Li(+)/H(+) antiporter activity; when associated with K-58." evidence="10">
    <original>K</original>
    <variation>E</variation>
    <location>
        <position position="57"/>
    </location>
</feature>
<feature type="mutagenesis site" description="Does not affect tNa(+) Li(+)/H(+) antiporter activity; when associated with A-57." evidence="10">
    <original>K</original>
    <variation>A</variation>
    <location>
        <position position="58"/>
    </location>
</feature>
<feature type="mutagenesis site" description="Decreases Na(+) Li(+)/H(+) antiporter activity; when associated with K-57." evidence="10">
    <original>K</original>
    <variation>E</variation>
    <location>
        <position position="58"/>
    </location>
</feature>
<feature type="mutagenesis site" description="Abolishes Na(+) Li(+)/H(+) antiporter activity. Shifts the specificity of the transporter from Na(+) to Li(+); when associated with E-432. Decreases plasma membrane localization. Partially retained in the ER; when associated with E-432." evidence="10">
    <original>E</original>
    <variation>R</variation>
    <location>
        <position position="215"/>
    </location>
</feature>
<feature type="mutagenesis site" description="Abolishes Na(+) Li(+)/H(+) antiporter activity. Changes subcellular localization. Retained in the ER." evidence="10">
    <original>G</original>
    <variation>R</variation>
    <location>
        <position position="238"/>
    </location>
</feature>
<feature type="mutagenesis site" description="Does not affect plasma membrane localization. Change in the substrate specificity with a preference for Li(+) over Na(+)." evidence="10">
    <original>V</original>
    <variation>L</variation>
    <location>
        <position position="240"/>
    </location>
</feature>
<feature type="mutagenesis site" description="Does not affect plasma membrane localization. Less sensitive to phloretin inhibition." evidence="10">
    <original>P</original>
    <variation>A</variation>
    <location>
        <position position="246"/>
    </location>
</feature>
<feature type="mutagenesis site" description="Does not affect plasma membrane localization. Abolishes antiporter activity. Less sensitive to phloretin inhibition." evidence="10">
    <original>P</original>
    <variation>G</variation>
    <location>
        <position position="246"/>
    </location>
</feature>
<feature type="mutagenesis site" description="Does not affect plasma membrane localization. Less sensitive to phloretin inhibition." evidence="10">
    <original>P</original>
    <variation>S</variation>
    <location>
        <position position="246"/>
    </location>
</feature>
<feature type="mutagenesis site" description="Does not affect plasma membrane localization. Less sensitive to phloretin inhibition." evidence="10">
    <original>P</original>
    <variation>T</variation>
    <location>
        <position position="246"/>
    </location>
</feature>
<feature type="mutagenesis site" description="Loss of ion transport activity; Does not rescue insulin secretion defect induced by knockdown of SLC9B2 in Min6 cells." evidence="4 7">
    <original>DD</original>
    <variation>CC</variation>
    <location>
        <begin position="278"/>
        <end position="279"/>
    </location>
</feature>
<feature type="mutagenesis site" description="Abolishes Na(+) Li(+)/H(+) antiporter activity. Does not affect plasma membrane localization." evidence="10">
    <original>D</original>
    <variation>G</variation>
    <location>
        <position position="278"/>
    </location>
</feature>
<feature type="mutagenesis site" description="Does not affect plasma membrane localization. Decreases the substrate specificity for Li(+)." evidence="10">
    <original>K</original>
    <variation>E</variation>
    <location>
        <position position="382"/>
    </location>
</feature>
<feature type="mutagenesis site" description="Does not affect plasma membrane localization. Decreases Na(+) Li(+)/H(+) antiporter activity." evidence="10">
    <original>A</original>
    <variation>E</variation>
    <location>
        <position position="406"/>
    </location>
</feature>
<feature type="mutagenesis site" description="Abolishes Na(+) Li(+)/H(+) antiporter activity. Shifts the specificity from Na(+) to Li(+); when associated with R-215. Decreases plasma membrane localization; when associated with R-215. Partially retained in the ER; when associated with R-215." evidence="10">
    <original>R</original>
    <variation>E</variation>
    <location>
        <position position="432"/>
    </location>
</feature>
<feature type="mutagenesis site" description="Loss of ion transport activity." evidence="9">
    <original>R</original>
    <variation>K</variation>
    <variation>H</variation>
    <location>
        <position position="432"/>
    </location>
</feature>
<feature type="mutagenesis site" description="Does not affect plasma membrane localization. Decreases the substrate specificity for Li(+)." evidence="10">
    <original>R</original>
    <variation>Q</variation>
    <location>
        <position position="432"/>
    </location>
</feature>
<feature type="helix" evidence="19">
    <location>
        <begin position="83"/>
        <end position="105"/>
    </location>
</feature>
<feature type="helix" evidence="19">
    <location>
        <begin position="107"/>
        <end position="109"/>
    </location>
</feature>
<feature type="helix" evidence="19">
    <location>
        <begin position="114"/>
        <end position="133"/>
    </location>
</feature>
<feature type="turn" evidence="19">
    <location>
        <begin position="134"/>
        <end position="136"/>
    </location>
</feature>
<feature type="strand" evidence="19">
    <location>
        <begin position="139"/>
        <end position="141"/>
    </location>
</feature>
<feature type="helix" evidence="19">
    <location>
        <begin position="145"/>
        <end position="158"/>
    </location>
</feature>
<feature type="helix" evidence="19">
    <location>
        <begin position="160"/>
        <end position="163"/>
    </location>
</feature>
<feature type="helix" evidence="19">
    <location>
        <begin position="170"/>
        <end position="189"/>
    </location>
</feature>
<feature type="helix" evidence="19">
    <location>
        <begin position="194"/>
        <end position="199"/>
    </location>
</feature>
<feature type="helix" evidence="19">
    <location>
        <begin position="202"/>
        <end position="223"/>
    </location>
</feature>
<feature type="turn" evidence="19">
    <location>
        <begin position="224"/>
        <end position="227"/>
    </location>
</feature>
<feature type="helix" evidence="19">
    <location>
        <begin position="231"/>
        <end position="240"/>
    </location>
</feature>
<feature type="helix" evidence="19">
    <location>
        <begin position="246"/>
        <end position="259"/>
    </location>
</feature>
<feature type="turn" evidence="19">
    <location>
        <begin position="263"/>
        <end position="266"/>
    </location>
</feature>
<feature type="helix" evidence="19">
    <location>
        <begin position="267"/>
        <end position="273"/>
    </location>
</feature>
<feature type="turn" evidence="19">
    <location>
        <begin position="274"/>
        <end position="276"/>
    </location>
</feature>
<feature type="helix" evidence="19">
    <location>
        <begin position="277"/>
        <end position="294"/>
    </location>
</feature>
<feature type="helix" evidence="19">
    <location>
        <begin position="299"/>
        <end position="326"/>
    </location>
</feature>
<feature type="helix" evidence="19">
    <location>
        <begin position="335"/>
        <end position="357"/>
    </location>
</feature>
<feature type="helix" evidence="19">
    <location>
        <begin position="362"/>
        <end position="377"/>
    </location>
</feature>
<feature type="turn" evidence="19">
    <location>
        <begin position="379"/>
        <end position="382"/>
    </location>
</feature>
<feature type="helix" evidence="19">
    <location>
        <begin position="383"/>
        <end position="405"/>
    </location>
</feature>
<feature type="strand" evidence="19">
    <location>
        <begin position="410"/>
        <end position="413"/>
    </location>
</feature>
<feature type="helix" evidence="19">
    <location>
        <begin position="419"/>
        <end position="439"/>
    </location>
</feature>
<feature type="turn" evidence="19">
    <location>
        <begin position="440"/>
        <end position="442"/>
    </location>
</feature>
<feature type="helix" evidence="19">
    <location>
        <begin position="447"/>
        <end position="455"/>
    </location>
</feature>
<feature type="helix" evidence="19">
    <location>
        <begin position="462"/>
        <end position="467"/>
    </location>
</feature>
<feature type="helix" evidence="19">
    <location>
        <begin position="470"/>
        <end position="478"/>
    </location>
</feature>
<feature type="helix" evidence="19">
    <location>
        <begin position="482"/>
        <end position="516"/>
    </location>
</feature>
<sequence length="537" mass="57564">MGDEDKRITYEDSEPSTGMNYTPSMHQEAQEETVMKLKGIDANEPTEGSILLKSSEKKLQETPTEANHVQRLRQMLACPPHGLLDRVITNVTIIVLLWAVVWSITGSECLPGGNLFGIIILFYCAIIGGKLLGLIKLPTLPPLPSLLGMLLAGFLIRNIPVINDNVQIKHKWSSSLRSIALSIILVRAGLGLDSKALKKLKGVCVRLSMGPCIVEACTSALLAHYLLGLPWQWGFILGFVLGAVSPAVVVPSMLLLQGGGYGVEKGVPTLLMAAGSFDDILAITGFNTCLGIAFSTGSTVFNVLRGVLEVVIGVATGSVLGFFIQYFPSRDQDKLVCKRTFLVLGLSVLAVFSSVHFGFPGSGGLCTLVMAFLAGMGWTSEKAEVEKIIAVAWDIFQPLLFGLIGAEVSIASLRPETVGLCVATVGIAVLIRILTTFLMVCFAGFNLKEKIFISFAWLPKATVQAAIGSVALDTARSHGEKQLEDYGMDVLTVAFLSILITAPIGSLLIGLLGPRLLQKVEHQNKDEEVQGETSVQV</sequence>
<reference key="1">
    <citation type="journal article" date="2004" name="Nat. Genet.">
        <title>Complete sequencing and characterization of 21,243 full-length human cDNAs.</title>
        <authorList>
            <person name="Ota T."/>
            <person name="Suzuki Y."/>
            <person name="Nishikawa T."/>
            <person name="Otsuki T."/>
            <person name="Sugiyama T."/>
            <person name="Irie R."/>
            <person name="Wakamatsu A."/>
            <person name="Hayashi K."/>
            <person name="Sato H."/>
            <person name="Nagai K."/>
            <person name="Kimura K."/>
            <person name="Makita H."/>
            <person name="Sekine M."/>
            <person name="Obayashi M."/>
            <person name="Nishi T."/>
            <person name="Shibahara T."/>
            <person name="Tanaka T."/>
            <person name="Ishii S."/>
            <person name="Yamamoto J."/>
            <person name="Saito K."/>
            <person name="Kawai Y."/>
            <person name="Isono Y."/>
            <person name="Nakamura Y."/>
            <person name="Nagahari K."/>
            <person name="Murakami K."/>
            <person name="Yasuda T."/>
            <person name="Iwayanagi T."/>
            <person name="Wagatsuma M."/>
            <person name="Shiratori A."/>
            <person name="Sudo H."/>
            <person name="Hosoiri T."/>
            <person name="Kaku Y."/>
            <person name="Kodaira H."/>
            <person name="Kondo H."/>
            <person name="Sugawara M."/>
            <person name="Takahashi M."/>
            <person name="Kanda K."/>
            <person name="Yokoi T."/>
            <person name="Furuya T."/>
            <person name="Kikkawa E."/>
            <person name="Omura Y."/>
            <person name="Abe K."/>
            <person name="Kamihara K."/>
            <person name="Katsuta N."/>
            <person name="Sato K."/>
            <person name="Tanikawa M."/>
            <person name="Yamazaki M."/>
            <person name="Ninomiya K."/>
            <person name="Ishibashi T."/>
            <person name="Yamashita H."/>
            <person name="Murakawa K."/>
            <person name="Fujimori K."/>
            <person name="Tanai H."/>
            <person name="Kimata M."/>
            <person name="Watanabe M."/>
            <person name="Hiraoka S."/>
            <person name="Chiba Y."/>
            <person name="Ishida S."/>
            <person name="Ono Y."/>
            <person name="Takiguchi S."/>
            <person name="Watanabe S."/>
            <person name="Yosida M."/>
            <person name="Hotuta T."/>
            <person name="Kusano J."/>
            <person name="Kanehori K."/>
            <person name="Takahashi-Fujii A."/>
            <person name="Hara H."/>
            <person name="Tanase T.-O."/>
            <person name="Nomura Y."/>
            <person name="Togiya S."/>
            <person name="Komai F."/>
            <person name="Hara R."/>
            <person name="Takeuchi K."/>
            <person name="Arita M."/>
            <person name="Imose N."/>
            <person name="Musashino K."/>
            <person name="Yuuki H."/>
            <person name="Oshima A."/>
            <person name="Sasaki N."/>
            <person name="Aotsuka S."/>
            <person name="Yoshikawa Y."/>
            <person name="Matsunawa H."/>
            <person name="Ichihara T."/>
            <person name="Shiohata N."/>
            <person name="Sano S."/>
            <person name="Moriya S."/>
            <person name="Momiyama H."/>
            <person name="Satoh N."/>
            <person name="Takami S."/>
            <person name="Terashima Y."/>
            <person name="Suzuki O."/>
            <person name="Nakagawa S."/>
            <person name="Senoh A."/>
            <person name="Mizoguchi H."/>
            <person name="Goto Y."/>
            <person name="Shimizu F."/>
            <person name="Wakebe H."/>
            <person name="Hishigaki H."/>
            <person name="Watanabe T."/>
            <person name="Sugiyama A."/>
            <person name="Takemoto M."/>
            <person name="Kawakami B."/>
            <person name="Yamazaki M."/>
            <person name="Watanabe K."/>
            <person name="Kumagai A."/>
            <person name="Itakura S."/>
            <person name="Fukuzumi Y."/>
            <person name="Fujimori Y."/>
            <person name="Komiyama M."/>
            <person name="Tashiro H."/>
            <person name="Tanigami A."/>
            <person name="Fujiwara T."/>
            <person name="Ono T."/>
            <person name="Yamada K."/>
            <person name="Fujii Y."/>
            <person name="Ozaki K."/>
            <person name="Hirao M."/>
            <person name="Ohmori Y."/>
            <person name="Kawabata A."/>
            <person name="Hikiji T."/>
            <person name="Kobatake N."/>
            <person name="Inagaki H."/>
            <person name="Ikema Y."/>
            <person name="Okamoto S."/>
            <person name="Okitani R."/>
            <person name="Kawakami T."/>
            <person name="Noguchi S."/>
            <person name="Itoh T."/>
            <person name="Shigeta K."/>
            <person name="Senba T."/>
            <person name="Matsumura K."/>
            <person name="Nakajima Y."/>
            <person name="Mizuno T."/>
            <person name="Morinaga M."/>
            <person name="Sasaki M."/>
            <person name="Togashi T."/>
            <person name="Oyama M."/>
            <person name="Hata H."/>
            <person name="Watanabe M."/>
            <person name="Komatsu T."/>
            <person name="Mizushima-Sugano J."/>
            <person name="Satoh T."/>
            <person name="Shirai Y."/>
            <person name="Takahashi Y."/>
            <person name="Nakagawa K."/>
            <person name="Okumura K."/>
            <person name="Nagase T."/>
            <person name="Nomura N."/>
            <person name="Kikuchi H."/>
            <person name="Masuho Y."/>
            <person name="Yamashita R."/>
            <person name="Nakai K."/>
            <person name="Yada T."/>
            <person name="Nakamura Y."/>
            <person name="Ohara O."/>
            <person name="Isogai T."/>
            <person name="Sugano S."/>
        </authorList>
    </citation>
    <scope>NUCLEOTIDE SEQUENCE [LARGE SCALE MRNA] (ISOFORM 1)</scope>
</reference>
<reference key="2">
    <citation type="journal article" date="2005" name="Nature">
        <title>Generation and annotation of the DNA sequences of human chromosomes 2 and 4.</title>
        <authorList>
            <person name="Hillier L.W."/>
            <person name="Graves T.A."/>
            <person name="Fulton R.S."/>
            <person name="Fulton L.A."/>
            <person name="Pepin K.H."/>
            <person name="Minx P."/>
            <person name="Wagner-McPherson C."/>
            <person name="Layman D."/>
            <person name="Wylie K."/>
            <person name="Sekhon M."/>
            <person name="Becker M.C."/>
            <person name="Fewell G.A."/>
            <person name="Delehaunty K.D."/>
            <person name="Miner T.L."/>
            <person name="Nash W.E."/>
            <person name="Kremitzki C."/>
            <person name="Oddy L."/>
            <person name="Du H."/>
            <person name="Sun H."/>
            <person name="Bradshaw-Cordum H."/>
            <person name="Ali J."/>
            <person name="Carter J."/>
            <person name="Cordes M."/>
            <person name="Harris A."/>
            <person name="Isak A."/>
            <person name="van Brunt A."/>
            <person name="Nguyen C."/>
            <person name="Du F."/>
            <person name="Courtney L."/>
            <person name="Kalicki J."/>
            <person name="Ozersky P."/>
            <person name="Abbott S."/>
            <person name="Armstrong J."/>
            <person name="Belter E.A."/>
            <person name="Caruso L."/>
            <person name="Cedroni M."/>
            <person name="Cotton M."/>
            <person name="Davidson T."/>
            <person name="Desai A."/>
            <person name="Elliott G."/>
            <person name="Erb T."/>
            <person name="Fronick C."/>
            <person name="Gaige T."/>
            <person name="Haakenson W."/>
            <person name="Haglund K."/>
            <person name="Holmes A."/>
            <person name="Harkins R."/>
            <person name="Kim K."/>
            <person name="Kruchowski S.S."/>
            <person name="Strong C.M."/>
            <person name="Grewal N."/>
            <person name="Goyea E."/>
            <person name="Hou S."/>
            <person name="Levy A."/>
            <person name="Martinka S."/>
            <person name="Mead K."/>
            <person name="McLellan M.D."/>
            <person name="Meyer R."/>
            <person name="Randall-Maher J."/>
            <person name="Tomlinson C."/>
            <person name="Dauphin-Kohlberg S."/>
            <person name="Kozlowicz-Reilly A."/>
            <person name="Shah N."/>
            <person name="Swearengen-Shahid S."/>
            <person name="Snider J."/>
            <person name="Strong J.T."/>
            <person name="Thompson J."/>
            <person name="Yoakum M."/>
            <person name="Leonard S."/>
            <person name="Pearman C."/>
            <person name="Trani L."/>
            <person name="Radionenko M."/>
            <person name="Waligorski J.E."/>
            <person name="Wang C."/>
            <person name="Rock S.M."/>
            <person name="Tin-Wollam A.-M."/>
            <person name="Maupin R."/>
            <person name="Latreille P."/>
            <person name="Wendl M.C."/>
            <person name="Yang S.-P."/>
            <person name="Pohl C."/>
            <person name="Wallis J.W."/>
            <person name="Spieth J."/>
            <person name="Bieri T.A."/>
            <person name="Berkowicz N."/>
            <person name="Nelson J.O."/>
            <person name="Osborne J."/>
            <person name="Ding L."/>
            <person name="Meyer R."/>
            <person name="Sabo A."/>
            <person name="Shotland Y."/>
            <person name="Sinha P."/>
            <person name="Wohldmann P.E."/>
            <person name="Cook L.L."/>
            <person name="Hickenbotham M.T."/>
            <person name="Eldred J."/>
            <person name="Williams D."/>
            <person name="Jones T.A."/>
            <person name="She X."/>
            <person name="Ciccarelli F.D."/>
            <person name="Izaurralde E."/>
            <person name="Taylor J."/>
            <person name="Schmutz J."/>
            <person name="Myers R.M."/>
            <person name="Cox D.R."/>
            <person name="Huang X."/>
            <person name="McPherson J.D."/>
            <person name="Mardis E.R."/>
            <person name="Clifton S.W."/>
            <person name="Warren W.C."/>
            <person name="Chinwalla A.T."/>
            <person name="Eddy S.R."/>
            <person name="Marra M.A."/>
            <person name="Ovcharenko I."/>
            <person name="Furey T.S."/>
            <person name="Miller W."/>
            <person name="Eichler E.E."/>
            <person name="Bork P."/>
            <person name="Suyama M."/>
            <person name="Torrents D."/>
            <person name="Waterston R.H."/>
            <person name="Wilson R.K."/>
        </authorList>
    </citation>
    <scope>NUCLEOTIDE SEQUENCE [LARGE SCALE GENOMIC DNA]</scope>
</reference>
<reference key="3">
    <citation type="submission" date="2005-07" db="EMBL/GenBank/DDBJ databases">
        <authorList>
            <person name="Mural R.J."/>
            <person name="Istrail S."/>
            <person name="Sutton G.G."/>
            <person name="Florea L."/>
            <person name="Halpern A.L."/>
            <person name="Mobarry C.M."/>
            <person name="Lippert R."/>
            <person name="Walenz B."/>
            <person name="Shatkay H."/>
            <person name="Dew I."/>
            <person name="Miller J.R."/>
            <person name="Flanigan M.J."/>
            <person name="Edwards N.J."/>
            <person name="Bolanos R."/>
            <person name="Fasulo D."/>
            <person name="Halldorsson B.V."/>
            <person name="Hannenhalli S."/>
            <person name="Turner R."/>
            <person name="Yooseph S."/>
            <person name="Lu F."/>
            <person name="Nusskern D.R."/>
            <person name="Shue B.C."/>
            <person name="Zheng X.H."/>
            <person name="Zhong F."/>
            <person name="Delcher A.L."/>
            <person name="Huson D.H."/>
            <person name="Kravitz S.A."/>
            <person name="Mouchard L."/>
            <person name="Reinert K."/>
            <person name="Remington K.A."/>
            <person name="Clark A.G."/>
            <person name="Waterman M.S."/>
            <person name="Eichler E.E."/>
            <person name="Adams M.D."/>
            <person name="Hunkapiller M.W."/>
            <person name="Myers E.W."/>
            <person name="Venter J.C."/>
        </authorList>
    </citation>
    <scope>NUCLEOTIDE SEQUENCE [LARGE SCALE GENOMIC DNA]</scope>
</reference>
<reference key="4">
    <citation type="journal article" date="2004" name="Genome Res.">
        <title>The status, quality, and expansion of the NIH full-length cDNA project: the Mammalian Gene Collection (MGC).</title>
        <authorList>
            <consortium name="The MGC Project Team"/>
        </authorList>
    </citation>
    <scope>NUCLEOTIDE SEQUENCE [LARGE SCALE MRNA] (ISOFORMS 1 AND 2)</scope>
    <source>
        <tissue>Lung</tissue>
        <tissue>Testis</tissue>
    </source>
</reference>
<reference key="5">
    <citation type="journal article" date="2007" name="Proc. Natl. Acad. Sci. U.S.A.">
        <title>A human Na+/H+ antiporter sharing evolutionary origins with bacterial NhaA may be a candidate gene for essential hypertension.</title>
        <authorList>
            <person name="Xiang M."/>
            <person name="Feng M."/>
            <person name="Muend S."/>
            <person name="Rao R."/>
        </authorList>
    </citation>
    <scope>FUNCTION</scope>
    <scope>TRANSPORTER ACTIVITY</scope>
    <scope>MUTAGENESIS OF 278-ASP-ASP-279</scope>
    <scope>TISSUE SPECIFICITY</scope>
    <scope>SUBCELLULAR LOCATION</scope>
</reference>
<reference key="6">
    <citation type="journal article" date="2008" name="J. Am. Soc. Nephrol.">
        <title>Characterization of the sodium/hydrogen exchanger NHA2.</title>
        <authorList>
            <person name="Fuster D.G."/>
            <person name="Zhang J."/>
            <person name="Shi M."/>
            <person name="Bobulescu I.A."/>
            <person name="Andersson S."/>
            <person name="Moe O.W."/>
        </authorList>
    </citation>
    <scope>TISSUE SPECIFICITY</scope>
    <scope>SUBCELLULAR LOCATION</scope>
    <scope>FUNCTION</scope>
</reference>
<reference key="7">
    <citation type="journal article" date="2012" name="J. Biol. Chem.">
        <title>Unconventional chemiosmotic coupling of NHA2, a mammalian Na+/H+ antiporter, to a plasma membrane H+ gradient.</title>
        <authorList>
            <person name="Kondapalli K.C."/>
            <person name="Kallay L.M."/>
            <person name="Muszelik M."/>
            <person name="Rao R."/>
        </authorList>
    </citation>
    <scope>FUNCTION</scope>
    <scope>TRANSPORTER ACTIVITY</scope>
    <scope>ACTIVITY REGULATION</scope>
</reference>
<reference key="8">
    <citation type="journal article" date="2013" name="Proc. Natl. Acad. Sci. U.S.A.">
        <title>Sodium/hydrogen exchanger NHA2 is critical for insulin secretion in beta-cells.</title>
        <authorList>
            <person name="Deisl C."/>
            <person name="Simonin A."/>
            <person name="Anderegg M."/>
            <person name="Albano G."/>
            <person name="Kovacs G."/>
            <person name="Ackermann D."/>
            <person name="Moch H."/>
            <person name="Dolci W."/>
            <person name="Thorens B."/>
            <person name="Hediger M.A."/>
            <person name="Fuster D.G."/>
        </authorList>
    </citation>
    <scope>MUTAGENESIS OF 278-ASP-ASP-279</scope>
</reference>
<reference key="9">
    <citation type="journal article" date="2014" name="J. Proteomics">
        <title>An enzyme assisted RP-RPLC approach for in-depth analysis of human liver phosphoproteome.</title>
        <authorList>
            <person name="Bian Y."/>
            <person name="Song C."/>
            <person name="Cheng K."/>
            <person name="Dong M."/>
            <person name="Wang F."/>
            <person name="Huang J."/>
            <person name="Sun D."/>
            <person name="Wang L."/>
            <person name="Ye M."/>
            <person name="Zou H."/>
        </authorList>
    </citation>
    <scope>PHOSPHORYLATION [LARGE SCALE ANALYSIS] AT SER-49</scope>
    <scope>IDENTIFICATION BY MASS SPECTROMETRY [LARGE SCALE ANALYSIS]</scope>
    <source>
        <tissue>Liver</tissue>
    </source>
</reference>
<reference key="10">
    <citation type="journal article" date="2017" name="Nat. Commun.">
        <title>Integrating mass spectrometry with MD simulations reveals the role of lipids in Na(+)/H(+) antiporters.</title>
        <authorList>
            <person name="Landreh M."/>
            <person name="Marklund E.G."/>
            <person name="Uzdavinys P."/>
            <person name="Degiacomi M.T."/>
            <person name="Coincon M."/>
            <person name="Gault J."/>
            <person name="Gupta K."/>
            <person name="Liko I."/>
            <person name="Benesch J.L."/>
            <person name="Drew D."/>
            <person name="Robinson C.V."/>
        </authorList>
    </citation>
    <scope>MASS SPECTROMETRY</scope>
    <scope>SUBUNIT</scope>
</reference>
<reference key="11">
    <citation type="journal article" date="2017" name="Proc. Natl. Acad. Sci. U.S.A.">
        <title>Dissecting the proton transport pathway in electrogenic Na(+)/H(+) antiporters.</title>
        <authorList>
            <person name="Uzdavinys P."/>
            <person name="Coincon M."/>
            <person name="Nji E."/>
            <person name="Ndi M."/>
            <person name="Winkelmann I."/>
            <person name="von Ballmoos C."/>
            <person name="Drew D."/>
        </authorList>
    </citation>
    <scope>FUNCTION</scope>
    <scope>TRANSPORTER ACTIVITY</scope>
    <scope>BIOPHYSICOCHEMICAL PROPERTIES</scope>
    <scope>MUTAGENESIS OF ARG-432</scope>
</reference>
<reference evidence="16" key="12">
    <citation type="submission" date="2020-12" db="PDB data bank">
        <title>CryoEM structure of the human sodium proton exchanger NHA2.</title>
        <authorList>
            <person name="Woehlert D."/>
            <person name="Kuhlbrandt W."/>
            <person name="Yildiz O."/>
        </authorList>
    </citation>
    <scope>STRUCTURE BY ELECTRON MICROSCOPY (3.10 ANGSTROMS)</scope>
</reference>
<reference evidence="17" key="13">
    <citation type="submission" date="2020-12" db="PDB data bank">
        <title>CryoEM structure of the human sodium proton exchanger NHA2 in nanodisc.</title>
        <authorList>
            <person name="Woehlert D."/>
            <person name="Kuhlbrandt W."/>
            <person name="Yildiz O."/>
        </authorList>
    </citation>
    <scope>STRUCTURE BY ELECTRON MICROSCOPY (7.20 ANGSTROMS)</scope>
</reference>
<reference key="14">
    <citation type="journal article" date="2022" name="Protein Sci.">
        <title>Allosteric links between the hydrophilic N-terminus and transmembrane core of human Na+ /H+ antiporter NHA2.</title>
        <authorList>
            <person name="Velazquez D."/>
            <person name="Prusa V."/>
            <person name="Masrati G."/>
            <person name="Yariv E."/>
            <person name="Sychrova H."/>
            <person name="Ben-Tal N."/>
            <person name="Zimmermannova O."/>
        </authorList>
    </citation>
    <scope>FUNCTION</scope>
    <scope>TRANSPORTER ACTIVITY</scope>
    <scope>ACTIVITY REGULATION</scope>
    <scope>SUBCELLULAR LOCATION</scope>
    <scope>MUTAGENESIS OF GLU-47; GLU-56; LYS-57; LYS-58; GLU-215; GLY-238; VAL-240; PRO-246; ASP-278; LYS-382; ALA-406 AND ARG-432</scope>
</reference>
<dbReference type="EMBL" id="AK172823">
    <property type="protein sequence ID" value="BAD18790.1"/>
    <property type="molecule type" value="mRNA"/>
</dbReference>
<dbReference type="EMBL" id="AC097485">
    <property type="status" value="NOT_ANNOTATED_CDS"/>
    <property type="molecule type" value="Genomic_DNA"/>
</dbReference>
<dbReference type="EMBL" id="CH471057">
    <property type="protein sequence ID" value="EAX06159.1"/>
    <property type="molecule type" value="Genomic_DNA"/>
</dbReference>
<dbReference type="EMBL" id="BC009732">
    <property type="protein sequence ID" value="AAH09732.1"/>
    <property type="molecule type" value="mRNA"/>
</dbReference>
<dbReference type="EMBL" id="BC047447">
    <property type="protein sequence ID" value="AAH47447.2"/>
    <property type="molecule type" value="mRNA"/>
</dbReference>
<dbReference type="CCDS" id="CCDS3662.1">
    <molecule id="Q86UD5-1"/>
</dbReference>
<dbReference type="RefSeq" id="NP_001287685.1">
    <property type="nucleotide sequence ID" value="NM_001300756.1"/>
</dbReference>
<dbReference type="RefSeq" id="NP_001357130.1">
    <molecule id="Q86UD5-1"/>
    <property type="nucleotide sequence ID" value="NM_001370201.1"/>
</dbReference>
<dbReference type="RefSeq" id="NP_001357131.1">
    <molecule id="Q86UD5-1"/>
    <property type="nucleotide sequence ID" value="NM_001370202.1"/>
</dbReference>
<dbReference type="RefSeq" id="NP_849155.2">
    <molecule id="Q86UD5-1"/>
    <property type="nucleotide sequence ID" value="NM_178833.5"/>
</dbReference>
<dbReference type="RefSeq" id="XP_006714148.1">
    <property type="nucleotide sequence ID" value="XM_006714085.2"/>
</dbReference>
<dbReference type="PDB" id="7B4L">
    <property type="method" value="EM"/>
    <property type="resolution" value="3.10 A"/>
    <property type="chains" value="A/B=1-537"/>
</dbReference>
<dbReference type="PDB" id="7B4M">
    <property type="method" value="EM"/>
    <property type="resolution" value="7.20 A"/>
    <property type="chains" value="A/B=1-537"/>
</dbReference>
<dbReference type="PDBsum" id="7B4L"/>
<dbReference type="PDBsum" id="7B4M"/>
<dbReference type="EMDB" id="EMD-12002"/>
<dbReference type="EMDB" id="EMD-12003"/>
<dbReference type="SMR" id="Q86UD5"/>
<dbReference type="BioGRID" id="126354">
    <property type="interactions" value="9"/>
</dbReference>
<dbReference type="FunCoup" id="Q86UD5">
    <property type="interactions" value="13"/>
</dbReference>
<dbReference type="IntAct" id="Q86UD5">
    <property type="interactions" value="5"/>
</dbReference>
<dbReference type="STRING" id="9606.ENSP00000378265"/>
<dbReference type="ChEMBL" id="CHEMBL5209631"/>
<dbReference type="TCDB" id="2.A.36.2.2">
    <property type="family name" value="the monovalent cation:proton antiporter-1 (cpa1) family"/>
</dbReference>
<dbReference type="iPTMnet" id="Q86UD5"/>
<dbReference type="PhosphoSitePlus" id="Q86UD5"/>
<dbReference type="SwissPalm" id="Q86UD5"/>
<dbReference type="BioMuta" id="SLC9B2"/>
<dbReference type="DMDM" id="121944426"/>
<dbReference type="jPOST" id="Q86UD5"/>
<dbReference type="MassIVE" id="Q86UD5"/>
<dbReference type="PaxDb" id="9606-ENSP00000378265"/>
<dbReference type="PeptideAtlas" id="Q86UD5"/>
<dbReference type="ProteomicsDB" id="69803">
    <molecule id="Q86UD5-1"/>
</dbReference>
<dbReference type="ProteomicsDB" id="69804">
    <molecule id="Q86UD5-2"/>
</dbReference>
<dbReference type="Pumba" id="Q86UD5"/>
<dbReference type="Antibodypedia" id="26081">
    <property type="antibodies" value="157 antibodies from 23 providers"/>
</dbReference>
<dbReference type="DNASU" id="133308"/>
<dbReference type="Ensembl" id="ENST00000362026.7">
    <molecule id="Q86UD5-1"/>
    <property type="protein sequence ID" value="ENSP00000354574.3"/>
    <property type="gene ID" value="ENSG00000164038.16"/>
</dbReference>
<dbReference type="Ensembl" id="ENST00000394785.9">
    <molecule id="Q86UD5-1"/>
    <property type="protein sequence ID" value="ENSP00000378265.3"/>
    <property type="gene ID" value="ENSG00000164038.16"/>
</dbReference>
<dbReference type="GeneID" id="133308"/>
<dbReference type="KEGG" id="hsa:133308"/>
<dbReference type="MANE-Select" id="ENST00000394785.9">
    <property type="protein sequence ID" value="ENSP00000378265.3"/>
    <property type="RefSeq nucleotide sequence ID" value="NM_178833.7"/>
    <property type="RefSeq protein sequence ID" value="NP_849155.2"/>
</dbReference>
<dbReference type="UCSC" id="uc003hwx.5">
    <molecule id="Q86UD5-1"/>
    <property type="organism name" value="human"/>
</dbReference>
<dbReference type="AGR" id="HGNC:25143"/>
<dbReference type="CTD" id="133308"/>
<dbReference type="DisGeNET" id="133308"/>
<dbReference type="GeneCards" id="SLC9B2"/>
<dbReference type="HGNC" id="HGNC:25143">
    <property type="gene designation" value="SLC9B2"/>
</dbReference>
<dbReference type="HPA" id="ENSG00000164038">
    <property type="expression patterns" value="Tissue enhanced (liver)"/>
</dbReference>
<dbReference type="MIM" id="611789">
    <property type="type" value="gene"/>
</dbReference>
<dbReference type="neXtProt" id="NX_Q86UD5"/>
<dbReference type="OpenTargets" id="ENSG00000164038"/>
<dbReference type="PharmGKB" id="PA162397515"/>
<dbReference type="VEuPathDB" id="HostDB:ENSG00000164038"/>
<dbReference type="eggNOG" id="KOG3826">
    <property type="taxonomic scope" value="Eukaryota"/>
</dbReference>
<dbReference type="GeneTree" id="ENSGT00390000013285"/>
<dbReference type="HOGENOM" id="CLU_018415_4_1_1"/>
<dbReference type="InParanoid" id="Q86UD5"/>
<dbReference type="OMA" id="WAIPTFA"/>
<dbReference type="OrthoDB" id="423807at2759"/>
<dbReference type="PAN-GO" id="Q86UD5">
    <property type="GO annotations" value="0 GO annotations based on evolutionary models"/>
</dbReference>
<dbReference type="PhylomeDB" id="Q86UD5"/>
<dbReference type="TreeFam" id="TF319087"/>
<dbReference type="PathwayCommons" id="Q86UD5"/>
<dbReference type="Reactome" id="R-HSA-2672351">
    <property type="pathway name" value="Stimuli-sensing channels"/>
</dbReference>
<dbReference type="SignaLink" id="Q86UD5"/>
<dbReference type="BioGRID-ORCS" id="133308">
    <property type="hits" value="13 hits in 1157 CRISPR screens"/>
</dbReference>
<dbReference type="ChiTaRS" id="SLC9B2">
    <property type="organism name" value="human"/>
</dbReference>
<dbReference type="GenomeRNAi" id="133308"/>
<dbReference type="Pharos" id="Q86UD5">
    <property type="development level" value="Tbio"/>
</dbReference>
<dbReference type="PRO" id="PR:Q86UD5"/>
<dbReference type="Proteomes" id="UP000005640">
    <property type="component" value="Chromosome 4"/>
</dbReference>
<dbReference type="RNAct" id="Q86UD5">
    <property type="molecule type" value="protein"/>
</dbReference>
<dbReference type="Bgee" id="ENSG00000164038">
    <property type="expression patterns" value="Expressed in sural nerve and 144 other cell types or tissues"/>
</dbReference>
<dbReference type="ExpressionAtlas" id="Q86UD5">
    <property type="expression patterns" value="baseline and differential"/>
</dbReference>
<dbReference type="GO" id="GO:0016324">
    <property type="term" value="C:apical plasma membrane"/>
    <property type="evidence" value="ECO:0007669"/>
    <property type="project" value="UniProtKB-SubCell"/>
</dbReference>
<dbReference type="GO" id="GO:0016323">
    <property type="term" value="C:basolateral plasma membrane"/>
    <property type="evidence" value="ECO:0007669"/>
    <property type="project" value="UniProtKB-SubCell"/>
</dbReference>
<dbReference type="GO" id="GO:0005743">
    <property type="term" value="C:mitochondrial inner membrane"/>
    <property type="evidence" value="ECO:0000304"/>
    <property type="project" value="Reactome"/>
</dbReference>
<dbReference type="GO" id="GO:0031966">
    <property type="term" value="C:mitochondrial membrane"/>
    <property type="evidence" value="ECO:0000314"/>
    <property type="project" value="UniProtKB"/>
</dbReference>
<dbReference type="GO" id="GO:0005739">
    <property type="term" value="C:mitochondrion"/>
    <property type="evidence" value="ECO:0006056"/>
    <property type="project" value="FlyBase"/>
</dbReference>
<dbReference type="GO" id="GO:0005886">
    <property type="term" value="C:plasma membrane"/>
    <property type="evidence" value="ECO:0000314"/>
    <property type="project" value="UniProtKB"/>
</dbReference>
<dbReference type="GO" id="GO:0055037">
    <property type="term" value="C:recycling endosome"/>
    <property type="evidence" value="ECO:0000250"/>
    <property type="project" value="UniProtKB"/>
</dbReference>
<dbReference type="GO" id="GO:0055038">
    <property type="term" value="C:recycling endosome membrane"/>
    <property type="evidence" value="ECO:0007669"/>
    <property type="project" value="UniProtKB-SubCell"/>
</dbReference>
<dbReference type="GO" id="GO:0097228">
    <property type="term" value="C:sperm principal piece"/>
    <property type="evidence" value="ECO:0000250"/>
    <property type="project" value="UniProtKB"/>
</dbReference>
<dbReference type="GO" id="GO:0030672">
    <property type="term" value="C:synaptic vesicle membrane"/>
    <property type="evidence" value="ECO:0007669"/>
    <property type="project" value="UniProtKB-SubCell"/>
</dbReference>
<dbReference type="GO" id="GO:0042802">
    <property type="term" value="F:identical protein binding"/>
    <property type="evidence" value="ECO:0000353"/>
    <property type="project" value="UniProtKB"/>
</dbReference>
<dbReference type="GO" id="GO:0010348">
    <property type="term" value="F:lithium:proton antiporter activity"/>
    <property type="evidence" value="ECO:0000314"/>
    <property type="project" value="UniProtKB"/>
</dbReference>
<dbReference type="GO" id="GO:0015385">
    <property type="term" value="F:sodium:proton antiporter activity"/>
    <property type="evidence" value="ECO:0000314"/>
    <property type="project" value="UniProtKB"/>
</dbReference>
<dbReference type="GO" id="GO:0072583">
    <property type="term" value="P:clathrin-dependent endocytosis"/>
    <property type="evidence" value="ECO:0007669"/>
    <property type="project" value="Ensembl"/>
</dbReference>
<dbReference type="GO" id="GO:0030317">
    <property type="term" value="P:flagellated sperm motility"/>
    <property type="evidence" value="ECO:0000250"/>
    <property type="project" value="UniProtKB"/>
</dbReference>
<dbReference type="GO" id="GO:0098662">
    <property type="term" value="P:inorganic cation transmembrane transport"/>
    <property type="evidence" value="ECO:0000318"/>
    <property type="project" value="GO_Central"/>
</dbReference>
<dbReference type="GO" id="GO:0010351">
    <property type="term" value="P:lithium ion transport"/>
    <property type="evidence" value="ECO:0000314"/>
    <property type="project" value="UniProtKB"/>
</dbReference>
<dbReference type="GO" id="GO:0034220">
    <property type="term" value="P:monoatomic ion transmembrane transport"/>
    <property type="evidence" value="ECO:0000304"/>
    <property type="project" value="Reactome"/>
</dbReference>
<dbReference type="GO" id="GO:2001206">
    <property type="term" value="P:positive regulation of osteoclast development"/>
    <property type="evidence" value="ECO:0007669"/>
    <property type="project" value="Ensembl"/>
</dbReference>
<dbReference type="GO" id="GO:0061178">
    <property type="term" value="P:regulation of insulin secretion involved in cellular response to glucose stimulus"/>
    <property type="evidence" value="ECO:0007669"/>
    <property type="project" value="Ensembl"/>
</dbReference>
<dbReference type="GO" id="GO:0055078">
    <property type="term" value="P:sodium ion homeostasis"/>
    <property type="evidence" value="ECO:0000250"/>
    <property type="project" value="UniProtKB"/>
</dbReference>
<dbReference type="GO" id="GO:0006814">
    <property type="term" value="P:sodium ion transport"/>
    <property type="evidence" value="ECO:0000314"/>
    <property type="project" value="UniProtKB"/>
</dbReference>
<dbReference type="FunFam" id="1.20.1530.20:FF:000012">
    <property type="entry name" value="sodium/hydrogen exchanger 9B2 isoform X1"/>
    <property type="match status" value="1"/>
</dbReference>
<dbReference type="Gene3D" id="1.20.1530.20">
    <property type="match status" value="1"/>
</dbReference>
<dbReference type="InterPro" id="IPR006153">
    <property type="entry name" value="Cation/H_exchanger_TM"/>
</dbReference>
<dbReference type="InterPro" id="IPR051843">
    <property type="entry name" value="CPA1_transporter"/>
</dbReference>
<dbReference type="InterPro" id="IPR038770">
    <property type="entry name" value="Na+/solute_symporter_sf"/>
</dbReference>
<dbReference type="PANTHER" id="PTHR31102">
    <property type="match status" value="1"/>
</dbReference>
<dbReference type="PANTHER" id="PTHR31102:SF14">
    <property type="entry name" value="SODIUM_HYDROGEN EXCHANGER 9B2"/>
    <property type="match status" value="1"/>
</dbReference>
<dbReference type="Pfam" id="PF00999">
    <property type="entry name" value="Na_H_Exchanger"/>
    <property type="match status" value="1"/>
</dbReference>
<evidence type="ECO:0000250" key="1">
    <source>
        <dbReference type="UniProtKB" id="A0A6P3HVI0"/>
    </source>
</evidence>
<evidence type="ECO:0000250" key="2">
    <source>
        <dbReference type="UniProtKB" id="Q5BKR2"/>
    </source>
</evidence>
<evidence type="ECO:0000256" key="3">
    <source>
        <dbReference type="SAM" id="MobiDB-lite"/>
    </source>
</evidence>
<evidence type="ECO:0000269" key="4">
    <source>
    </source>
</evidence>
<evidence type="ECO:0000269" key="5">
    <source>
    </source>
</evidence>
<evidence type="ECO:0000269" key="6">
    <source>
    </source>
</evidence>
<evidence type="ECO:0000269" key="7">
    <source>
    </source>
</evidence>
<evidence type="ECO:0000269" key="8">
    <source>
    </source>
</evidence>
<evidence type="ECO:0000269" key="9">
    <source>
    </source>
</evidence>
<evidence type="ECO:0000269" key="10">
    <source>
    </source>
</evidence>
<evidence type="ECO:0000269" key="11">
    <source ref="12"/>
</evidence>
<evidence type="ECO:0000303" key="12">
    <source>
    </source>
</evidence>
<evidence type="ECO:0000305" key="13"/>
<evidence type="ECO:0000312" key="14">
    <source>
        <dbReference type="HGNC" id="HGNC:25143"/>
    </source>
</evidence>
<evidence type="ECO:0000312" key="15">
    <source>
        <dbReference type="PDB" id="7B4L"/>
    </source>
</evidence>
<evidence type="ECO:0007744" key="16">
    <source>
        <dbReference type="PDB" id="7B4L"/>
    </source>
</evidence>
<evidence type="ECO:0007744" key="17">
    <source>
        <dbReference type="PDB" id="7B4M"/>
    </source>
</evidence>
<evidence type="ECO:0007744" key="18">
    <source>
    </source>
</evidence>
<evidence type="ECO:0007829" key="19">
    <source>
        <dbReference type="PDB" id="7B4L"/>
    </source>
</evidence>
<name>SL9B2_HUMAN</name>
<organism>
    <name type="scientific">Homo sapiens</name>
    <name type="common">Human</name>
    <dbReference type="NCBI Taxonomy" id="9606"/>
    <lineage>
        <taxon>Eukaryota</taxon>
        <taxon>Metazoa</taxon>
        <taxon>Chordata</taxon>
        <taxon>Craniata</taxon>
        <taxon>Vertebrata</taxon>
        <taxon>Euteleostomi</taxon>
        <taxon>Mammalia</taxon>
        <taxon>Eutheria</taxon>
        <taxon>Euarchontoglires</taxon>
        <taxon>Primates</taxon>
        <taxon>Haplorrhini</taxon>
        <taxon>Catarrhini</taxon>
        <taxon>Hominidae</taxon>
        <taxon>Homo</taxon>
    </lineage>
</organism>
<gene>
    <name evidence="14" type="primary">SLC9B2</name>
    <name type="synonym">NHA2</name>
    <name type="synonym">NHEDC2</name>
</gene>